<gene>
    <name type="primary">RPL14</name>
</gene>
<dbReference type="EMBL" id="U16738">
    <property type="protein sequence ID" value="AAC16021.1"/>
    <property type="molecule type" value="mRNA"/>
</dbReference>
<dbReference type="EMBL" id="D87735">
    <property type="protein sequence ID" value="BAA13443.1"/>
    <property type="molecule type" value="mRNA"/>
</dbReference>
<dbReference type="EMBL" id="AB061822">
    <property type="protein sequence ID" value="BAB79460.1"/>
    <property type="molecule type" value="Genomic_DNA"/>
</dbReference>
<dbReference type="EMBL" id="DQ118667">
    <property type="protein sequence ID" value="AAZ38460.1"/>
    <property type="molecule type" value="mRNA"/>
</dbReference>
<dbReference type="EMBL" id="AK223111">
    <property type="protein sequence ID" value="BAD96831.1"/>
    <property type="molecule type" value="mRNA"/>
</dbReference>
<dbReference type="EMBL" id="AC104186">
    <property type="status" value="NOT_ANNOTATED_CDS"/>
    <property type="molecule type" value="Genomic_DNA"/>
</dbReference>
<dbReference type="EMBL" id="BC000606">
    <property type="protein sequence ID" value="AAH00606.1"/>
    <property type="molecule type" value="mRNA"/>
</dbReference>
<dbReference type="EMBL" id="BC005134">
    <property type="protein sequence ID" value="AAH05134.1"/>
    <property type="molecule type" value="mRNA"/>
</dbReference>
<dbReference type="EMBL" id="BC009294">
    <property type="protein sequence ID" value="AAH09294.1"/>
    <property type="molecule type" value="mRNA"/>
</dbReference>
<dbReference type="EMBL" id="BC019651">
    <property type="protein sequence ID" value="AAH19651.1"/>
    <property type="molecule type" value="mRNA"/>
</dbReference>
<dbReference type="EMBL" id="BC022805">
    <property type="protein sequence ID" value="AAH22805.1"/>
    <property type="molecule type" value="mRNA"/>
</dbReference>
<dbReference type="EMBL" id="BC029036">
    <property type="protein sequence ID" value="AAH29036.1"/>
    <property type="molecule type" value="mRNA"/>
</dbReference>
<dbReference type="EMBL" id="AB046407">
    <property type="protein sequence ID" value="BAB21253.1"/>
    <property type="molecule type" value="Genomic_DNA"/>
</dbReference>
<dbReference type="CCDS" id="CCDS33739.1"/>
<dbReference type="CCDS" id="CCDS43070.1"/>
<dbReference type="RefSeq" id="NP_001030168.1">
    <property type="nucleotide sequence ID" value="NM_001034996.3"/>
</dbReference>
<dbReference type="RefSeq" id="NP_003964.3">
    <property type="nucleotide sequence ID" value="NM_003973.4"/>
</dbReference>
<dbReference type="PDB" id="4UG0">
    <property type="method" value="EM"/>
    <property type="chains" value="LM=1-215"/>
</dbReference>
<dbReference type="PDB" id="4V6X">
    <property type="method" value="EM"/>
    <property type="resolution" value="5.00 A"/>
    <property type="chains" value="CM=1-215"/>
</dbReference>
<dbReference type="PDB" id="5AJ0">
    <property type="method" value="EM"/>
    <property type="resolution" value="3.50 A"/>
    <property type="chains" value="AM=1-215"/>
</dbReference>
<dbReference type="PDB" id="5LKS">
    <property type="method" value="EM"/>
    <property type="resolution" value="3.60 A"/>
    <property type="chains" value="LM=1-215"/>
</dbReference>
<dbReference type="PDB" id="5T2C">
    <property type="method" value="EM"/>
    <property type="resolution" value="3.60 A"/>
    <property type="chains" value="s=1-215"/>
</dbReference>
<dbReference type="PDB" id="6IP5">
    <property type="method" value="EM"/>
    <property type="resolution" value="3.90 A"/>
    <property type="chains" value="2G=1-215"/>
</dbReference>
<dbReference type="PDB" id="6IP6">
    <property type="method" value="EM"/>
    <property type="resolution" value="4.50 A"/>
    <property type="chains" value="2G=1-215"/>
</dbReference>
<dbReference type="PDB" id="6IP8">
    <property type="method" value="EM"/>
    <property type="resolution" value="3.90 A"/>
    <property type="chains" value="2G=1-215"/>
</dbReference>
<dbReference type="PDB" id="6LQM">
    <property type="method" value="EM"/>
    <property type="resolution" value="3.09 A"/>
    <property type="chains" value="S=1-215"/>
</dbReference>
<dbReference type="PDB" id="6LSR">
    <property type="method" value="EM"/>
    <property type="resolution" value="3.13 A"/>
    <property type="chains" value="S=1-215"/>
</dbReference>
<dbReference type="PDB" id="6LSS">
    <property type="method" value="EM"/>
    <property type="resolution" value="3.23 A"/>
    <property type="chains" value="S=1-215"/>
</dbReference>
<dbReference type="PDB" id="6LU8">
    <property type="method" value="EM"/>
    <property type="resolution" value="3.13 A"/>
    <property type="chains" value="S=1-215"/>
</dbReference>
<dbReference type="PDB" id="6OLE">
    <property type="method" value="EM"/>
    <property type="resolution" value="3.10 A"/>
    <property type="chains" value="N=2-140"/>
</dbReference>
<dbReference type="PDB" id="6OLF">
    <property type="method" value="EM"/>
    <property type="resolution" value="3.90 A"/>
    <property type="chains" value="N=2-140"/>
</dbReference>
<dbReference type="PDB" id="6OLG">
    <property type="method" value="EM"/>
    <property type="resolution" value="3.40 A"/>
    <property type="chains" value="AM=2-140"/>
</dbReference>
<dbReference type="PDB" id="6OLI">
    <property type="method" value="EM"/>
    <property type="resolution" value="3.50 A"/>
    <property type="chains" value="N=2-140"/>
</dbReference>
<dbReference type="PDB" id="6OLZ">
    <property type="method" value="EM"/>
    <property type="resolution" value="3.90 A"/>
    <property type="chains" value="AM=2-140"/>
</dbReference>
<dbReference type="PDB" id="6OM0">
    <property type="method" value="EM"/>
    <property type="resolution" value="3.10 A"/>
    <property type="chains" value="N=2-140"/>
</dbReference>
<dbReference type="PDB" id="6OM7">
    <property type="method" value="EM"/>
    <property type="resolution" value="3.70 A"/>
    <property type="chains" value="N=2-140"/>
</dbReference>
<dbReference type="PDB" id="6QZP">
    <property type="method" value="EM"/>
    <property type="resolution" value="2.90 A"/>
    <property type="chains" value="LM=2-140"/>
</dbReference>
<dbReference type="PDB" id="6W6L">
    <property type="method" value="EM"/>
    <property type="resolution" value="3.84 A"/>
    <property type="chains" value="N=1-215"/>
</dbReference>
<dbReference type="PDB" id="6XA1">
    <property type="method" value="EM"/>
    <property type="resolution" value="2.80 A"/>
    <property type="chains" value="LM=2-140"/>
</dbReference>
<dbReference type="PDB" id="6Y0G">
    <property type="method" value="EM"/>
    <property type="resolution" value="3.20 A"/>
    <property type="chains" value="LM=1-215"/>
</dbReference>
<dbReference type="PDB" id="6Y2L">
    <property type="method" value="EM"/>
    <property type="resolution" value="3.00 A"/>
    <property type="chains" value="LM=1-215"/>
</dbReference>
<dbReference type="PDB" id="6Y57">
    <property type="method" value="EM"/>
    <property type="resolution" value="3.50 A"/>
    <property type="chains" value="LM=1-215"/>
</dbReference>
<dbReference type="PDB" id="6Y6X">
    <property type="method" value="EM"/>
    <property type="resolution" value="2.80 A"/>
    <property type="chains" value="LM=2-140"/>
</dbReference>
<dbReference type="PDB" id="6Z6L">
    <property type="method" value="EM"/>
    <property type="resolution" value="3.00 A"/>
    <property type="chains" value="LM=1-215"/>
</dbReference>
<dbReference type="PDB" id="6Z6M">
    <property type="method" value="EM"/>
    <property type="resolution" value="3.10 A"/>
    <property type="chains" value="LM=1-215"/>
</dbReference>
<dbReference type="PDB" id="6Z6N">
    <property type="method" value="EM"/>
    <property type="resolution" value="2.90 A"/>
    <property type="chains" value="LM=1-215"/>
</dbReference>
<dbReference type="PDB" id="6ZM7">
    <property type="method" value="EM"/>
    <property type="resolution" value="2.70 A"/>
    <property type="chains" value="LM=1-215"/>
</dbReference>
<dbReference type="PDB" id="6ZME">
    <property type="method" value="EM"/>
    <property type="resolution" value="3.00 A"/>
    <property type="chains" value="LM=1-215"/>
</dbReference>
<dbReference type="PDB" id="6ZMI">
    <property type="method" value="EM"/>
    <property type="resolution" value="2.60 A"/>
    <property type="chains" value="LM=1-215"/>
</dbReference>
<dbReference type="PDB" id="6ZMO">
    <property type="method" value="EM"/>
    <property type="resolution" value="3.10 A"/>
    <property type="chains" value="LM=1-215"/>
</dbReference>
<dbReference type="PDB" id="7BHP">
    <property type="method" value="EM"/>
    <property type="resolution" value="3.30 A"/>
    <property type="chains" value="LM=1-215"/>
</dbReference>
<dbReference type="PDB" id="7F5S">
    <property type="method" value="EM"/>
    <property type="resolution" value="2.72 A"/>
    <property type="chains" value="LM=1-215"/>
</dbReference>
<dbReference type="PDB" id="7QVP">
    <property type="method" value="EM"/>
    <property type="resolution" value="3.00 A"/>
    <property type="chains" value="LM/MM=1-215"/>
</dbReference>
<dbReference type="PDB" id="7XNX">
    <property type="method" value="EM"/>
    <property type="resolution" value="2.70 A"/>
    <property type="chains" value="LM=1-215"/>
</dbReference>
<dbReference type="PDB" id="7XNY">
    <property type="method" value="EM"/>
    <property type="resolution" value="2.50 A"/>
    <property type="chains" value="LM=1-215"/>
</dbReference>
<dbReference type="PDB" id="8A3D">
    <property type="method" value="EM"/>
    <property type="resolution" value="1.67 A"/>
    <property type="chains" value="s=1-215"/>
</dbReference>
<dbReference type="PDB" id="8FKP">
    <property type="method" value="EM"/>
    <property type="resolution" value="2.85 A"/>
    <property type="chains" value="L8=1-215"/>
</dbReference>
<dbReference type="PDB" id="8FKQ">
    <property type="method" value="EM"/>
    <property type="resolution" value="2.76 A"/>
    <property type="chains" value="L8=1-215"/>
</dbReference>
<dbReference type="PDB" id="8FKR">
    <property type="method" value="EM"/>
    <property type="resolution" value="2.89 A"/>
    <property type="chains" value="L8=1-215"/>
</dbReference>
<dbReference type="PDB" id="8FKS">
    <property type="method" value="EM"/>
    <property type="resolution" value="2.88 A"/>
    <property type="chains" value="L8=1-215"/>
</dbReference>
<dbReference type="PDB" id="8FKT">
    <property type="method" value="EM"/>
    <property type="resolution" value="2.81 A"/>
    <property type="chains" value="L8=1-215"/>
</dbReference>
<dbReference type="PDB" id="8FKU">
    <property type="method" value="EM"/>
    <property type="resolution" value="2.82 A"/>
    <property type="chains" value="L8=1-215"/>
</dbReference>
<dbReference type="PDB" id="8FKV">
    <property type="method" value="EM"/>
    <property type="resolution" value="2.47 A"/>
    <property type="chains" value="L8=1-215"/>
</dbReference>
<dbReference type="PDB" id="8FKW">
    <property type="method" value="EM"/>
    <property type="resolution" value="2.50 A"/>
    <property type="chains" value="L8=1-215"/>
</dbReference>
<dbReference type="PDB" id="8FKX">
    <property type="method" value="EM"/>
    <property type="resolution" value="2.59 A"/>
    <property type="chains" value="L8=1-215"/>
</dbReference>
<dbReference type="PDB" id="8FKY">
    <property type="method" value="EM"/>
    <property type="resolution" value="2.67 A"/>
    <property type="chains" value="L8=1-215"/>
</dbReference>
<dbReference type="PDB" id="8FKZ">
    <property type="method" value="EM"/>
    <property type="resolution" value="3.04 A"/>
    <property type="chains" value="L8=1-215"/>
</dbReference>
<dbReference type="PDB" id="8FL0">
    <property type="method" value="EM"/>
    <property type="resolution" value="2.91 A"/>
    <property type="chains" value="L8=1-215"/>
</dbReference>
<dbReference type="PDB" id="8FL2">
    <property type="method" value="EM"/>
    <property type="resolution" value="2.67 A"/>
    <property type="chains" value="L8=1-215"/>
</dbReference>
<dbReference type="PDB" id="8FL3">
    <property type="method" value="EM"/>
    <property type="resolution" value="2.53 A"/>
    <property type="chains" value="L8=1-215"/>
</dbReference>
<dbReference type="PDB" id="8FL4">
    <property type="method" value="EM"/>
    <property type="resolution" value="2.89 A"/>
    <property type="chains" value="L8=1-215"/>
</dbReference>
<dbReference type="PDB" id="8FL6">
    <property type="method" value="EM"/>
    <property type="resolution" value="2.62 A"/>
    <property type="chains" value="L8=1-215"/>
</dbReference>
<dbReference type="PDB" id="8FL7">
    <property type="method" value="EM"/>
    <property type="resolution" value="2.55 A"/>
    <property type="chains" value="L8=1-215"/>
</dbReference>
<dbReference type="PDB" id="8FL9">
    <property type="method" value="EM"/>
    <property type="resolution" value="2.75 A"/>
    <property type="chains" value="L8=1-215"/>
</dbReference>
<dbReference type="PDB" id="8FLA">
    <property type="method" value="EM"/>
    <property type="resolution" value="2.63 A"/>
    <property type="chains" value="L8=1-215"/>
</dbReference>
<dbReference type="PDB" id="8FLB">
    <property type="method" value="EM"/>
    <property type="resolution" value="2.55 A"/>
    <property type="chains" value="L8=1-215"/>
</dbReference>
<dbReference type="PDB" id="8FLC">
    <property type="method" value="EM"/>
    <property type="resolution" value="2.76 A"/>
    <property type="chains" value="L8=1-215"/>
</dbReference>
<dbReference type="PDB" id="8FLD">
    <property type="method" value="EM"/>
    <property type="resolution" value="2.58 A"/>
    <property type="chains" value="L8=1-215"/>
</dbReference>
<dbReference type="PDB" id="8FLE">
    <property type="method" value="EM"/>
    <property type="resolution" value="2.48 A"/>
    <property type="chains" value="L8=1-215"/>
</dbReference>
<dbReference type="PDB" id="8FLF">
    <property type="method" value="EM"/>
    <property type="resolution" value="2.65 A"/>
    <property type="chains" value="L8=1-215"/>
</dbReference>
<dbReference type="PDB" id="8G5Y">
    <property type="method" value="EM"/>
    <property type="resolution" value="2.29 A"/>
    <property type="chains" value="LM=1-215"/>
</dbReference>
<dbReference type="PDB" id="8G5Z">
    <property type="method" value="EM"/>
    <property type="resolution" value="2.64 A"/>
    <property type="chains" value="LM=2-137"/>
</dbReference>
<dbReference type="PDB" id="8G60">
    <property type="method" value="EM"/>
    <property type="resolution" value="2.54 A"/>
    <property type="chains" value="LM=1-215"/>
</dbReference>
<dbReference type="PDB" id="8G61">
    <property type="method" value="EM"/>
    <property type="resolution" value="2.94 A"/>
    <property type="chains" value="LM=1-215"/>
</dbReference>
<dbReference type="PDB" id="8G6J">
    <property type="method" value="EM"/>
    <property type="resolution" value="2.80 A"/>
    <property type="chains" value="LM=1-215"/>
</dbReference>
<dbReference type="PDB" id="8GLP">
    <property type="method" value="EM"/>
    <property type="resolution" value="1.67 A"/>
    <property type="chains" value="LM=1-215"/>
</dbReference>
<dbReference type="PDB" id="8IDT">
    <property type="method" value="EM"/>
    <property type="resolution" value="2.80 A"/>
    <property type="chains" value="S=1-215"/>
</dbReference>
<dbReference type="PDB" id="8IDY">
    <property type="method" value="EM"/>
    <property type="resolution" value="3.00 A"/>
    <property type="chains" value="S=1-215"/>
</dbReference>
<dbReference type="PDB" id="8IE3">
    <property type="method" value="EM"/>
    <property type="resolution" value="3.30 A"/>
    <property type="chains" value="S=1-215"/>
</dbReference>
<dbReference type="PDB" id="8IFD">
    <property type="method" value="EM"/>
    <property type="resolution" value="2.59 A"/>
    <property type="chains" value="2G=1-215"/>
</dbReference>
<dbReference type="PDB" id="8IFE">
    <property type="method" value="EM"/>
    <property type="resolution" value="2.57 A"/>
    <property type="chains" value="2G=1-215"/>
</dbReference>
<dbReference type="PDB" id="8INE">
    <property type="method" value="EM"/>
    <property type="resolution" value="3.20 A"/>
    <property type="chains" value="S=1-215"/>
</dbReference>
<dbReference type="PDB" id="8INF">
    <property type="method" value="EM"/>
    <property type="resolution" value="3.00 A"/>
    <property type="chains" value="S=1-215"/>
</dbReference>
<dbReference type="PDB" id="8INK">
    <property type="method" value="EM"/>
    <property type="resolution" value="3.20 A"/>
    <property type="chains" value="S=1-215"/>
</dbReference>
<dbReference type="PDB" id="8IPD">
    <property type="method" value="EM"/>
    <property type="resolution" value="3.20 A"/>
    <property type="chains" value="S=1-215"/>
</dbReference>
<dbReference type="PDB" id="8IPX">
    <property type="method" value="EM"/>
    <property type="resolution" value="4.30 A"/>
    <property type="chains" value="S=1-215"/>
</dbReference>
<dbReference type="PDB" id="8IPY">
    <property type="method" value="EM"/>
    <property type="resolution" value="3.20 A"/>
    <property type="chains" value="S=1-215"/>
</dbReference>
<dbReference type="PDB" id="8IR1">
    <property type="method" value="EM"/>
    <property type="resolution" value="3.30 A"/>
    <property type="chains" value="S=1-215"/>
</dbReference>
<dbReference type="PDB" id="8IR3">
    <property type="method" value="EM"/>
    <property type="resolution" value="3.50 A"/>
    <property type="chains" value="S=1-215"/>
</dbReference>
<dbReference type="PDB" id="8JDJ">
    <property type="method" value="EM"/>
    <property type="resolution" value="2.50 A"/>
    <property type="chains" value="R=1-215"/>
</dbReference>
<dbReference type="PDB" id="8JDK">
    <property type="method" value="EM"/>
    <property type="resolution" value="2.26 A"/>
    <property type="chains" value="R=1-215"/>
</dbReference>
<dbReference type="PDB" id="8JDL">
    <property type="method" value="EM"/>
    <property type="resolution" value="2.42 A"/>
    <property type="chains" value="R=1-215"/>
</dbReference>
<dbReference type="PDB" id="8JDM">
    <property type="method" value="EM"/>
    <property type="resolution" value="2.67 A"/>
    <property type="chains" value="R=1-215"/>
</dbReference>
<dbReference type="PDB" id="8K2C">
    <property type="method" value="EM"/>
    <property type="resolution" value="2.40 A"/>
    <property type="chains" value="LM=1-215"/>
</dbReference>
<dbReference type="PDB" id="8OHD">
    <property type="method" value="EM"/>
    <property type="resolution" value="3.10 A"/>
    <property type="chains" value="LM=1-215"/>
</dbReference>
<dbReference type="PDB" id="8OJ0">
    <property type="method" value="EM"/>
    <property type="resolution" value="3.30 A"/>
    <property type="chains" value="LM=1-215"/>
</dbReference>
<dbReference type="PDB" id="8OJ5">
    <property type="method" value="EM"/>
    <property type="resolution" value="2.90 A"/>
    <property type="chains" value="LM=1-215"/>
</dbReference>
<dbReference type="PDB" id="8OJ8">
    <property type="method" value="EM"/>
    <property type="resolution" value="3.30 A"/>
    <property type="chains" value="LM=1-215"/>
</dbReference>
<dbReference type="PDB" id="8QFD">
    <property type="method" value="EM"/>
    <property type="resolution" value="2.20 A"/>
    <property type="chains" value="M=1-215"/>
</dbReference>
<dbReference type="PDB" id="8QOI">
    <property type="method" value="EM"/>
    <property type="resolution" value="1.90 A"/>
    <property type="chains" value="LM=1-215"/>
</dbReference>
<dbReference type="PDB" id="8QYX">
    <property type="method" value="EM"/>
    <property type="resolution" value="1.78 A"/>
    <property type="chains" value="G1=1-215"/>
</dbReference>
<dbReference type="PDB" id="8RL2">
    <property type="method" value="EM"/>
    <property type="resolution" value="2.84 A"/>
    <property type="chains" value="LM=1-215"/>
</dbReference>
<dbReference type="PDB" id="8UKB">
    <property type="method" value="EM"/>
    <property type="resolution" value="3.05 A"/>
    <property type="chains" value="LM=2-140"/>
</dbReference>
<dbReference type="PDB" id="8XSX">
    <property type="method" value="EM"/>
    <property type="resolution" value="2.40 A"/>
    <property type="chains" value="LM=1-215"/>
</dbReference>
<dbReference type="PDB" id="8XSY">
    <property type="method" value="EM"/>
    <property type="resolution" value="3.00 A"/>
    <property type="chains" value="LM=1-215"/>
</dbReference>
<dbReference type="PDB" id="8XSZ">
    <property type="method" value="EM"/>
    <property type="resolution" value="3.20 A"/>
    <property type="chains" value="LM=1-215"/>
</dbReference>
<dbReference type="PDB" id="8Y0W">
    <property type="method" value="EM"/>
    <property type="resolution" value="3.40 A"/>
    <property type="chains" value="LM=1-215"/>
</dbReference>
<dbReference type="PDB" id="8Y0X">
    <property type="method" value="EM"/>
    <property type="resolution" value="3.30 A"/>
    <property type="chains" value="LM=1-215"/>
</dbReference>
<dbReference type="PDB" id="8YOO">
    <property type="method" value="EM"/>
    <property type="resolution" value="2.00 A"/>
    <property type="chains" value="LM=1-215"/>
</dbReference>
<dbReference type="PDB" id="8YOP">
    <property type="method" value="EM"/>
    <property type="resolution" value="2.20 A"/>
    <property type="chains" value="LM=1-215"/>
</dbReference>
<dbReference type="PDB" id="9C3H">
    <property type="method" value="EM"/>
    <property type="resolution" value="2.00 A"/>
    <property type="chains" value="LM=1-215"/>
</dbReference>
<dbReference type="PDB" id="9G8M">
    <property type="method" value="EM"/>
    <property type="resolution" value="3.30 A"/>
    <property type="chains" value="LM=1-215"/>
</dbReference>
<dbReference type="PDB" id="9GMO">
    <property type="method" value="EM"/>
    <property type="resolution" value="2.59 A"/>
    <property type="chains" value="s=1-215"/>
</dbReference>
<dbReference type="PDBsum" id="4UG0"/>
<dbReference type="PDBsum" id="4V6X"/>
<dbReference type="PDBsum" id="5AJ0"/>
<dbReference type="PDBsum" id="5LKS"/>
<dbReference type="PDBsum" id="5T2C"/>
<dbReference type="PDBsum" id="6IP5"/>
<dbReference type="PDBsum" id="6IP6"/>
<dbReference type="PDBsum" id="6IP8"/>
<dbReference type="PDBsum" id="6LQM"/>
<dbReference type="PDBsum" id="6LSR"/>
<dbReference type="PDBsum" id="6LSS"/>
<dbReference type="PDBsum" id="6LU8"/>
<dbReference type="PDBsum" id="6OLE"/>
<dbReference type="PDBsum" id="6OLF"/>
<dbReference type="PDBsum" id="6OLG"/>
<dbReference type="PDBsum" id="6OLI"/>
<dbReference type="PDBsum" id="6OLZ"/>
<dbReference type="PDBsum" id="6OM0"/>
<dbReference type="PDBsum" id="6OM7"/>
<dbReference type="PDBsum" id="6QZP"/>
<dbReference type="PDBsum" id="6W6L"/>
<dbReference type="PDBsum" id="6XA1"/>
<dbReference type="PDBsum" id="6Y0G"/>
<dbReference type="PDBsum" id="6Y2L"/>
<dbReference type="PDBsum" id="6Y57"/>
<dbReference type="PDBsum" id="6Y6X"/>
<dbReference type="PDBsum" id="6Z6L"/>
<dbReference type="PDBsum" id="6Z6M"/>
<dbReference type="PDBsum" id="6Z6N"/>
<dbReference type="PDBsum" id="6ZM7"/>
<dbReference type="PDBsum" id="6ZME"/>
<dbReference type="PDBsum" id="6ZMI"/>
<dbReference type="PDBsum" id="6ZMO"/>
<dbReference type="PDBsum" id="7BHP"/>
<dbReference type="PDBsum" id="7F5S"/>
<dbReference type="PDBsum" id="7QVP"/>
<dbReference type="PDBsum" id="7XNX"/>
<dbReference type="PDBsum" id="7XNY"/>
<dbReference type="PDBsum" id="8A3D"/>
<dbReference type="PDBsum" id="8FKP"/>
<dbReference type="PDBsum" id="8FKQ"/>
<dbReference type="PDBsum" id="8FKR"/>
<dbReference type="PDBsum" id="8FKS"/>
<dbReference type="PDBsum" id="8FKT"/>
<dbReference type="PDBsum" id="8FKU"/>
<dbReference type="PDBsum" id="8FKV"/>
<dbReference type="PDBsum" id="8FKW"/>
<dbReference type="PDBsum" id="8FKX"/>
<dbReference type="PDBsum" id="8FKY"/>
<dbReference type="PDBsum" id="8FKZ"/>
<dbReference type="PDBsum" id="8FL0"/>
<dbReference type="PDBsum" id="8FL2"/>
<dbReference type="PDBsum" id="8FL3"/>
<dbReference type="PDBsum" id="8FL4"/>
<dbReference type="PDBsum" id="8FL6"/>
<dbReference type="PDBsum" id="8FL7"/>
<dbReference type="PDBsum" id="8FL9"/>
<dbReference type="PDBsum" id="8FLA"/>
<dbReference type="PDBsum" id="8FLB"/>
<dbReference type="PDBsum" id="8FLC"/>
<dbReference type="PDBsum" id="8FLD"/>
<dbReference type="PDBsum" id="8FLE"/>
<dbReference type="PDBsum" id="8FLF"/>
<dbReference type="PDBsum" id="8G5Y"/>
<dbReference type="PDBsum" id="8G5Z"/>
<dbReference type="PDBsum" id="8G60"/>
<dbReference type="PDBsum" id="8G61"/>
<dbReference type="PDBsum" id="8G6J"/>
<dbReference type="PDBsum" id="8GLP"/>
<dbReference type="PDBsum" id="8IDT"/>
<dbReference type="PDBsum" id="8IDY"/>
<dbReference type="PDBsum" id="8IE3"/>
<dbReference type="PDBsum" id="8IFD"/>
<dbReference type="PDBsum" id="8IFE"/>
<dbReference type="PDBsum" id="8INE"/>
<dbReference type="PDBsum" id="8INF"/>
<dbReference type="PDBsum" id="8INK"/>
<dbReference type="PDBsum" id="8IPD"/>
<dbReference type="PDBsum" id="8IPX"/>
<dbReference type="PDBsum" id="8IPY"/>
<dbReference type="PDBsum" id="8IR1"/>
<dbReference type="PDBsum" id="8IR3"/>
<dbReference type="PDBsum" id="8JDJ"/>
<dbReference type="PDBsum" id="8JDK"/>
<dbReference type="PDBsum" id="8JDL"/>
<dbReference type="PDBsum" id="8JDM"/>
<dbReference type="PDBsum" id="8K2C"/>
<dbReference type="PDBsum" id="8OHD"/>
<dbReference type="PDBsum" id="8OJ0"/>
<dbReference type="PDBsum" id="8OJ5"/>
<dbReference type="PDBsum" id="8OJ8"/>
<dbReference type="PDBsum" id="8QFD"/>
<dbReference type="PDBsum" id="8QOI"/>
<dbReference type="PDBsum" id="8QYX"/>
<dbReference type="PDBsum" id="8RL2"/>
<dbReference type="PDBsum" id="8UKB"/>
<dbReference type="PDBsum" id="8XSX"/>
<dbReference type="PDBsum" id="8XSY"/>
<dbReference type="PDBsum" id="8XSZ"/>
<dbReference type="PDBsum" id="8Y0W"/>
<dbReference type="PDBsum" id="8Y0X"/>
<dbReference type="PDBsum" id="8YOO"/>
<dbReference type="PDBsum" id="8YOP"/>
<dbReference type="PDBsum" id="9C3H"/>
<dbReference type="PDBsum" id="9G8M"/>
<dbReference type="PDBsum" id="9GMO"/>
<dbReference type="EMDB" id="EMD-0948"/>
<dbReference type="EMDB" id="EMD-0963"/>
<dbReference type="EMDB" id="EMD-0964"/>
<dbReference type="EMDB" id="EMD-0978"/>
<dbReference type="EMDB" id="EMD-10668"/>
<dbReference type="EMDB" id="EMD-10674"/>
<dbReference type="EMDB" id="EMD-10690"/>
<dbReference type="EMDB" id="EMD-10709"/>
<dbReference type="EMDB" id="EMD-11098"/>
<dbReference type="EMDB" id="EMD-11099"/>
<dbReference type="EMDB" id="EMD-11100"/>
<dbReference type="EMDB" id="EMD-11288"/>
<dbReference type="EMDB" id="EMD-11289"/>
<dbReference type="EMDB" id="EMD-11292"/>
<dbReference type="EMDB" id="EMD-11299"/>
<dbReference type="EMDB" id="EMD-12189"/>
<dbReference type="EMDB" id="EMD-14181"/>
<dbReference type="EMDB" id="EMD-16880"/>
<dbReference type="EMDB" id="EMD-16902"/>
<dbReference type="EMDB" id="EMD-16905"/>
<dbReference type="EMDB" id="EMD-16908"/>
<dbReference type="EMDB" id="EMD-18382"/>
<dbReference type="EMDB" id="EMD-18539"/>
<dbReference type="EMDB" id="EMD-18765"/>
<dbReference type="EMDB" id="EMD-19330"/>
<dbReference type="EMDB" id="EMD-29252"/>
<dbReference type="EMDB" id="EMD-29253"/>
<dbReference type="EMDB" id="EMD-29254"/>
<dbReference type="EMDB" id="EMD-29255"/>
<dbReference type="EMDB" id="EMD-29256"/>
<dbReference type="EMDB" id="EMD-29257"/>
<dbReference type="EMDB" id="EMD-29258"/>
<dbReference type="EMDB" id="EMD-29259"/>
<dbReference type="EMDB" id="EMD-29260"/>
<dbReference type="EMDB" id="EMD-29261"/>
<dbReference type="EMDB" id="EMD-29262"/>
<dbReference type="EMDB" id="EMD-29263"/>
<dbReference type="EMDB" id="EMD-29265"/>
<dbReference type="EMDB" id="EMD-29266"/>
<dbReference type="EMDB" id="EMD-29267"/>
<dbReference type="EMDB" id="EMD-29268"/>
<dbReference type="EMDB" id="EMD-29269"/>
<dbReference type="EMDB" id="EMD-29271"/>
<dbReference type="EMDB" id="EMD-29272"/>
<dbReference type="EMDB" id="EMD-29273"/>
<dbReference type="EMDB" id="EMD-29274"/>
<dbReference type="EMDB" id="EMD-29275"/>
<dbReference type="EMDB" id="EMD-29276"/>
<dbReference type="EMDB" id="EMD-29277"/>
<dbReference type="EMDB" id="EMD-29757"/>
<dbReference type="EMDB" id="EMD-29758"/>
<dbReference type="EMDB" id="EMD-29759"/>
<dbReference type="EMDB" id="EMD-29760"/>
<dbReference type="EMDB" id="EMD-29771"/>
<dbReference type="EMDB" id="EMD-31465"/>
<dbReference type="EMDB" id="EMD-33329"/>
<dbReference type="EMDB" id="EMD-33330"/>
<dbReference type="EMDB" id="EMD-35370"/>
<dbReference type="EMDB" id="EMD-35371"/>
<dbReference type="EMDB" id="EMD-35375"/>
<dbReference type="EMDB" id="EMD-35413"/>
<dbReference type="EMDB" id="EMD-35414"/>
<dbReference type="EMDB" id="EMD-35596"/>
<dbReference type="EMDB" id="EMD-35597"/>
<dbReference type="EMDB" id="EMD-35599"/>
<dbReference type="EMDB" id="EMD-35639"/>
<dbReference type="EMDB" id="EMD-35649"/>
<dbReference type="EMDB" id="EMD-35651"/>
<dbReference type="EMDB" id="EMD-35672"/>
<dbReference type="EMDB" id="EMD-35673"/>
<dbReference type="EMDB" id="EMD-36178"/>
<dbReference type="EMDB" id="EMD-36179"/>
<dbReference type="EMDB" id="EMD-36180"/>
<dbReference type="EMDB" id="EMD-36181"/>
<dbReference type="EMDB" id="EMD-36838"/>
<dbReference type="EMDB" id="EMD-38629"/>
<dbReference type="EMDB" id="EMD-38630"/>
<dbReference type="EMDB" id="EMD-38631"/>
<dbReference type="EMDB" id="EMD-3883"/>
<dbReference type="EMDB" id="EMD-39455"/>
<dbReference type="EMDB" id="EMD-39456"/>
<dbReference type="EMDB" id="EMD-40205"/>
<dbReference type="EMDB" id="EMD-4070"/>
<dbReference type="EMDB" id="EMD-42351"/>
<dbReference type="EMDB" id="EMD-45170"/>
<dbReference type="EMDB" id="EMD-51132"/>
<dbReference type="EMDB" id="EMD-51452"/>
<dbReference type="EMDB" id="EMD-9701"/>
<dbReference type="EMDB" id="EMD-9702"/>
<dbReference type="EMDB" id="EMD-9703"/>
<dbReference type="SMR" id="P50914"/>
<dbReference type="BioGRID" id="114507">
    <property type="interactions" value="567"/>
</dbReference>
<dbReference type="ComplexPortal" id="CPX-5183">
    <property type="entry name" value="60S cytosolic large ribosomal subunit"/>
</dbReference>
<dbReference type="ComplexPortal" id="CPX-7664">
    <property type="entry name" value="60S cytosolic large ribosomal subunit, testis-specific variant"/>
</dbReference>
<dbReference type="ComplexPortal" id="CPX-7665">
    <property type="entry name" value="60S cytosolic large ribosomal subunit, striated muscle variant"/>
</dbReference>
<dbReference type="CORUM" id="P50914"/>
<dbReference type="FunCoup" id="P50914">
    <property type="interactions" value="1683"/>
</dbReference>
<dbReference type="IntAct" id="P50914">
    <property type="interactions" value="282"/>
</dbReference>
<dbReference type="MINT" id="P50914"/>
<dbReference type="STRING" id="9606.ENSP00000379506"/>
<dbReference type="DrugBank" id="DB11638">
    <property type="generic name" value="Artenimol"/>
</dbReference>
<dbReference type="GlyGen" id="P50914">
    <property type="glycosylation" value="1 site, 1 O-linked glycan (1 site)"/>
</dbReference>
<dbReference type="iPTMnet" id="P50914"/>
<dbReference type="MetOSite" id="P50914"/>
<dbReference type="PhosphoSitePlus" id="P50914"/>
<dbReference type="SwissPalm" id="P50914"/>
<dbReference type="BioMuta" id="RPL14"/>
<dbReference type="DMDM" id="212276521"/>
<dbReference type="jPOST" id="P50914"/>
<dbReference type="MassIVE" id="P50914"/>
<dbReference type="PaxDb" id="9606-ENSP00000379506"/>
<dbReference type="PeptideAtlas" id="P50914"/>
<dbReference type="ProteomicsDB" id="56271"/>
<dbReference type="Pumba" id="P50914"/>
<dbReference type="TopDownProteomics" id="P50914"/>
<dbReference type="Antibodypedia" id="29027">
    <property type="antibodies" value="258 antibodies from 31 providers"/>
</dbReference>
<dbReference type="DNASU" id="9045"/>
<dbReference type="Ensembl" id="ENST00000338970.10">
    <property type="protein sequence ID" value="ENSP00000345156.6"/>
    <property type="gene ID" value="ENSG00000188846.14"/>
</dbReference>
<dbReference type="Ensembl" id="ENST00000396203.7">
    <property type="protein sequence ID" value="ENSP00000379506.2"/>
    <property type="gene ID" value="ENSG00000188846.14"/>
</dbReference>
<dbReference type="GeneID" id="9045"/>
<dbReference type="KEGG" id="hsa:9045"/>
<dbReference type="MANE-Select" id="ENST00000396203.7">
    <property type="protein sequence ID" value="ENSP00000379506.2"/>
    <property type="RefSeq nucleotide sequence ID" value="NM_001034996.3"/>
    <property type="RefSeq protein sequence ID" value="NP_001030168.1"/>
</dbReference>
<dbReference type="UCSC" id="uc003ckg.5">
    <property type="organism name" value="human"/>
</dbReference>
<dbReference type="AGR" id="HGNC:10305"/>
<dbReference type="CTD" id="9045"/>
<dbReference type="DisGeNET" id="9045"/>
<dbReference type="GeneCards" id="RPL14"/>
<dbReference type="HGNC" id="HGNC:10305">
    <property type="gene designation" value="RPL14"/>
</dbReference>
<dbReference type="HPA" id="ENSG00000188846">
    <property type="expression patterns" value="Low tissue specificity"/>
</dbReference>
<dbReference type="MIM" id="617414">
    <property type="type" value="gene"/>
</dbReference>
<dbReference type="neXtProt" id="NX_P50914"/>
<dbReference type="OpenTargets" id="ENSG00000188846"/>
<dbReference type="PharmGKB" id="PA34673"/>
<dbReference type="VEuPathDB" id="HostDB:ENSG00000188846"/>
<dbReference type="eggNOG" id="KOG3421">
    <property type="taxonomic scope" value="Eukaryota"/>
</dbReference>
<dbReference type="GeneTree" id="ENSGT00390000007888"/>
<dbReference type="HOGENOM" id="CLU_082438_0_0_1"/>
<dbReference type="InParanoid" id="P50914"/>
<dbReference type="OMA" id="HNYNESH"/>
<dbReference type="OrthoDB" id="1875589at2759"/>
<dbReference type="PAN-GO" id="P50914">
    <property type="GO annotations" value="4 GO annotations based on evolutionary models"/>
</dbReference>
<dbReference type="PhylomeDB" id="P50914"/>
<dbReference type="TreeFam" id="TF314356"/>
<dbReference type="PathwayCommons" id="P50914"/>
<dbReference type="Reactome" id="R-HSA-156827">
    <property type="pathway name" value="L13a-mediated translational silencing of Ceruloplasmin expression"/>
</dbReference>
<dbReference type="Reactome" id="R-HSA-156902">
    <property type="pathway name" value="Peptide chain elongation"/>
</dbReference>
<dbReference type="Reactome" id="R-HSA-1799339">
    <property type="pathway name" value="SRP-dependent cotranslational protein targeting to membrane"/>
</dbReference>
<dbReference type="Reactome" id="R-HSA-192823">
    <property type="pathway name" value="Viral mRNA Translation"/>
</dbReference>
<dbReference type="Reactome" id="R-HSA-2408557">
    <property type="pathway name" value="Selenocysteine synthesis"/>
</dbReference>
<dbReference type="Reactome" id="R-HSA-6791226">
    <property type="pathway name" value="Major pathway of rRNA processing in the nucleolus and cytosol"/>
</dbReference>
<dbReference type="Reactome" id="R-HSA-72689">
    <property type="pathway name" value="Formation of a pool of free 40S subunits"/>
</dbReference>
<dbReference type="Reactome" id="R-HSA-72706">
    <property type="pathway name" value="GTP hydrolysis and joining of the 60S ribosomal subunit"/>
</dbReference>
<dbReference type="Reactome" id="R-HSA-72764">
    <property type="pathway name" value="Eukaryotic Translation Termination"/>
</dbReference>
<dbReference type="Reactome" id="R-HSA-9010553">
    <property type="pathway name" value="Regulation of expression of SLITs and ROBOs"/>
</dbReference>
<dbReference type="Reactome" id="R-HSA-9633012">
    <property type="pathway name" value="Response of EIF2AK4 (GCN2) to amino acid deficiency"/>
</dbReference>
<dbReference type="Reactome" id="R-HSA-975956">
    <property type="pathway name" value="Nonsense Mediated Decay (NMD) independent of the Exon Junction Complex (EJC)"/>
</dbReference>
<dbReference type="Reactome" id="R-HSA-975957">
    <property type="pathway name" value="Nonsense Mediated Decay (NMD) enhanced by the Exon Junction Complex (EJC)"/>
</dbReference>
<dbReference type="SignaLink" id="P50914"/>
<dbReference type="SIGNOR" id="P50914"/>
<dbReference type="BioGRID-ORCS" id="9045">
    <property type="hits" value="809 hits in 1167 CRISPR screens"/>
</dbReference>
<dbReference type="CD-CODE" id="91857CE7">
    <property type="entry name" value="Nucleolus"/>
</dbReference>
<dbReference type="CD-CODE" id="FB4E32DD">
    <property type="entry name" value="Presynaptic clusters and postsynaptic densities"/>
</dbReference>
<dbReference type="ChiTaRS" id="RPL14">
    <property type="organism name" value="human"/>
</dbReference>
<dbReference type="GeneWiki" id="60S_ribosomal_protein_L14"/>
<dbReference type="GenomeRNAi" id="9045"/>
<dbReference type="Pharos" id="P50914">
    <property type="development level" value="Tbio"/>
</dbReference>
<dbReference type="PRO" id="PR:P50914"/>
<dbReference type="Proteomes" id="UP000005640">
    <property type="component" value="Chromosome 3"/>
</dbReference>
<dbReference type="RNAct" id="P50914">
    <property type="molecule type" value="protein"/>
</dbReference>
<dbReference type="Bgee" id="ENSG00000188846">
    <property type="expression patterns" value="Expressed in left ovary and 178 other cell types or tissues"/>
</dbReference>
<dbReference type="ExpressionAtlas" id="P50914">
    <property type="expression patterns" value="baseline and differential"/>
</dbReference>
<dbReference type="GO" id="GO:0005737">
    <property type="term" value="C:cytoplasm"/>
    <property type="evidence" value="ECO:0000303"/>
    <property type="project" value="ComplexPortal"/>
</dbReference>
<dbReference type="GO" id="GO:0005829">
    <property type="term" value="C:cytosol"/>
    <property type="evidence" value="ECO:0000304"/>
    <property type="project" value="Reactome"/>
</dbReference>
<dbReference type="GO" id="GO:0022625">
    <property type="term" value="C:cytosolic large ribosomal subunit"/>
    <property type="evidence" value="ECO:0000314"/>
    <property type="project" value="UniProtKB"/>
</dbReference>
<dbReference type="GO" id="GO:0022626">
    <property type="term" value="C:cytosolic ribosome"/>
    <property type="evidence" value="ECO:0000314"/>
    <property type="project" value="FlyBase"/>
</dbReference>
<dbReference type="GO" id="GO:0070062">
    <property type="term" value="C:extracellular exosome"/>
    <property type="evidence" value="ECO:0007005"/>
    <property type="project" value="UniProtKB"/>
</dbReference>
<dbReference type="GO" id="GO:0016020">
    <property type="term" value="C:membrane"/>
    <property type="evidence" value="ECO:0007005"/>
    <property type="project" value="UniProtKB"/>
</dbReference>
<dbReference type="GO" id="GO:0014069">
    <property type="term" value="C:postsynaptic density"/>
    <property type="evidence" value="ECO:0000314"/>
    <property type="project" value="SynGO"/>
</dbReference>
<dbReference type="GO" id="GO:0045296">
    <property type="term" value="F:cadherin binding"/>
    <property type="evidence" value="ECO:0007005"/>
    <property type="project" value="BHF-UCL"/>
</dbReference>
<dbReference type="GO" id="GO:0003723">
    <property type="term" value="F:RNA binding"/>
    <property type="evidence" value="ECO:0007005"/>
    <property type="project" value="UniProtKB"/>
</dbReference>
<dbReference type="GO" id="GO:0003735">
    <property type="term" value="F:structural constituent of ribosome"/>
    <property type="evidence" value="ECO:0000314"/>
    <property type="project" value="UniProtKB"/>
</dbReference>
<dbReference type="GO" id="GO:0002181">
    <property type="term" value="P:cytoplasmic translation"/>
    <property type="evidence" value="ECO:0000303"/>
    <property type="project" value="ComplexPortal"/>
</dbReference>
<dbReference type="GO" id="GO:0042273">
    <property type="term" value="P:ribosomal large subunit biogenesis"/>
    <property type="evidence" value="ECO:0000315"/>
    <property type="project" value="UniProtKB"/>
</dbReference>
<dbReference type="GO" id="GO:0006364">
    <property type="term" value="P:rRNA processing"/>
    <property type="evidence" value="ECO:0000315"/>
    <property type="project" value="UniProtKB"/>
</dbReference>
<dbReference type="GO" id="GO:0006412">
    <property type="term" value="P:translation"/>
    <property type="evidence" value="ECO:0000304"/>
    <property type="project" value="ProtInc"/>
</dbReference>
<dbReference type="CDD" id="cd23702">
    <property type="entry name" value="eL14"/>
    <property type="match status" value="1"/>
</dbReference>
<dbReference type="FunFam" id="2.30.30.30:FF:000022">
    <property type="entry name" value="60S ribosomal protein L14"/>
    <property type="match status" value="1"/>
</dbReference>
<dbReference type="Gene3D" id="2.30.30.30">
    <property type="match status" value="1"/>
</dbReference>
<dbReference type="Gene3D" id="6.10.250.2270">
    <property type="match status" value="1"/>
</dbReference>
<dbReference type="InterPro" id="IPR014722">
    <property type="entry name" value="Rib_uL2_dom2"/>
</dbReference>
<dbReference type="InterPro" id="IPR039660">
    <property type="entry name" value="Ribosomal_eL14"/>
</dbReference>
<dbReference type="InterPro" id="IPR002784">
    <property type="entry name" value="Ribosomal_eL14_dom"/>
</dbReference>
<dbReference type="InterPro" id="IPR008991">
    <property type="entry name" value="Translation_prot_SH3-like_sf"/>
</dbReference>
<dbReference type="PANTHER" id="PTHR11127">
    <property type="entry name" value="60S RIBOSOMAL PROTEIN L14"/>
    <property type="match status" value="1"/>
</dbReference>
<dbReference type="PANTHER" id="PTHR11127:SF4">
    <property type="entry name" value="LARGE RIBOSOMAL SUBUNIT PROTEIN EL14"/>
    <property type="match status" value="1"/>
</dbReference>
<dbReference type="Pfam" id="PF01929">
    <property type="entry name" value="Ribosomal_L14e"/>
    <property type="match status" value="1"/>
</dbReference>
<dbReference type="SUPFAM" id="SSF50104">
    <property type="entry name" value="Translation proteins SH3-like domain"/>
    <property type="match status" value="1"/>
</dbReference>
<comment type="function">
    <text evidence="5 6 14">Component of the large ribosomal subunit (PubMed:12962325, PubMed:23636399, PubMed:32669547). The ribosome is a large ribonucleoprotein complex responsible for the synthesis of proteins in the cell (PubMed:12962325, PubMed:23636399, PubMed:32669547).</text>
</comment>
<comment type="subunit">
    <text evidence="5 6 14">Component of the large ribosomal subunit (PubMed:12962325, PubMed:23636399, PubMed:32669547).</text>
</comment>
<comment type="interaction">
    <interactant intactId="EBI-356746">
        <id>P50914</id>
    </interactant>
    <interactant intactId="EBI-358163">
        <id>P10412</id>
        <label>H1-4</label>
    </interactant>
    <organismsDiffer>false</organismsDiffer>
    <experiments>2</experiments>
</comment>
<comment type="interaction">
    <interactant intactId="EBI-356746">
        <id>P50914</id>
    </interactant>
    <interactant intactId="EBI-5323863">
        <id>Q5S007</id>
        <label>LRRK2</label>
    </interactant>
    <organismsDiffer>false</organismsDiffer>
    <experiments>2</experiments>
</comment>
<comment type="interaction">
    <interactant intactId="EBI-356746">
        <id>P50914</id>
    </interactant>
    <interactant intactId="EBI-738731">
        <id>Q8WV24</id>
        <label>PHLDA1</label>
    </interactant>
    <organismsDiffer>false</organismsDiffer>
    <experiments>2</experiments>
</comment>
<comment type="interaction">
    <interactant intactId="EBI-356746">
        <id>P50914</id>
    </interactant>
    <interactant intactId="EBI-348313">
        <id>P36578</id>
        <label>RPL4</label>
    </interactant>
    <organismsDiffer>false</organismsDiffer>
    <experiments>4</experiments>
</comment>
<comment type="subcellular location">
    <subcellularLocation>
        <location evidence="5">Cytoplasm</location>
    </subcellularLocation>
</comment>
<comment type="polymorphism">
    <text evidence="13 15 16 17">The poly-Ala stretch is highly polymorphic.</text>
</comment>
<comment type="similarity">
    <text evidence="12">Belongs to the eukaryotic ribosomal protein eL14 family.</text>
</comment>
<accession>P50914</accession>
<accession>Q45RF0</accession>
<accession>Q53G20</accession>
<accession>Q8TBD5</accession>
<accession>Q8WUT0</accession>
<accession>Q92579</accession>
<accession>Q96GR0</accession>
<accession>Q9BSB8</accession>
<accession>Q9BW65</accession>
<accession>Q9BYF6</accession>
<reference key="1">
    <citation type="journal article" date="1996" name="Diabetes">
        <title>Identification of trinucleotide repeat-containing genes in human pancreatic islets.</title>
        <authorList>
            <person name="Aoki M."/>
            <person name="Koranyi L."/>
            <person name="Riggs A.C."/>
            <person name="Wasson J."/>
            <person name="Chiu K.C."/>
            <person name="Vaxillaire M."/>
            <person name="Froguel P."/>
            <person name="Gough S."/>
            <person name="Liu L."/>
            <person name="Donis-Keller H."/>
            <person name="Permutt M.A."/>
        </authorList>
    </citation>
    <scope>NUCLEOTIDE SEQUENCE [MRNA]</scope>
    <scope>VARIANT 158-ALA-ALA-159 DEL</scope>
    <source>
        <tissue>Pancreas</tissue>
    </source>
</reference>
<reference key="2">
    <citation type="journal article" date="1998" name="Biochem. Biophys. Res. Commun.">
        <title>Triplet repeat-containing ribosomal protein L14 gene in immortalized human endothelial cell line (t-HUE4).</title>
        <authorList>
            <person name="Tanaka M."/>
            <person name="Tanaka T."/>
            <person name="Harata M."/>
            <person name="Suzuki T."/>
            <person name="Mitsui Y."/>
        </authorList>
    </citation>
    <scope>NUCLEOTIDE SEQUENCE [MRNA]</scope>
    <scope>VARIANT ALA-ALA-ALA-ALA-ALA-159 INS</scope>
    <source>
        <tissue>Umbilical vein</tissue>
    </source>
</reference>
<reference key="3">
    <citation type="journal article" date="2002" name="Genome Res.">
        <title>The human ribosomal protein genes: sequencing and comparative analysis of 73 genes.</title>
        <authorList>
            <person name="Yoshihama M."/>
            <person name="Uechi T."/>
            <person name="Asakawa S."/>
            <person name="Kawasaki K."/>
            <person name="Kato S."/>
            <person name="Higa S."/>
            <person name="Maeda N."/>
            <person name="Minoshima S."/>
            <person name="Tanaka T."/>
            <person name="Shimizu N."/>
            <person name="Kenmochi N."/>
        </authorList>
    </citation>
    <scope>NUCLEOTIDE SEQUENCE [GENOMIC DNA]</scope>
    <scope>VARIANT ALA-ALA-ALA-ALA-ALA-159 INS</scope>
</reference>
<reference key="4">
    <citation type="submission" date="2005-07" db="EMBL/GenBank/DDBJ databases">
        <authorList>
            <person name="Lin L."/>
            <person name="Nong W."/>
            <person name="Zhou G."/>
            <person name="Ke R."/>
            <person name="Shen C."/>
            <person name="Zhong G."/>
            <person name="Zheng Z."/>
            <person name="Liang M."/>
            <person name="Wen S."/>
            <person name="Li H."/>
            <person name="Yang S."/>
        </authorList>
    </citation>
    <scope>NUCLEOTIDE SEQUENCE [MRNA]</scope>
</reference>
<reference key="5">
    <citation type="submission" date="2005-04" db="EMBL/GenBank/DDBJ databases">
        <authorList>
            <person name="Suzuki Y."/>
            <person name="Sugano S."/>
            <person name="Totoki Y."/>
            <person name="Toyoda A."/>
            <person name="Takeda T."/>
            <person name="Sakaki Y."/>
            <person name="Tanaka A."/>
            <person name="Yokoyama S."/>
        </authorList>
    </citation>
    <scope>NUCLEOTIDE SEQUENCE [LARGE SCALE MRNA]</scope>
    <scope>VARIANT ALA-ALA-ALA-ALA-ALA-159 INS</scope>
</reference>
<reference key="6">
    <citation type="journal article" date="2006" name="Nature">
        <title>The DNA sequence, annotation and analysis of human chromosome 3.</title>
        <authorList>
            <person name="Muzny D.M."/>
            <person name="Scherer S.E."/>
            <person name="Kaul R."/>
            <person name="Wang J."/>
            <person name="Yu J."/>
            <person name="Sudbrak R."/>
            <person name="Buhay C.J."/>
            <person name="Chen R."/>
            <person name="Cree A."/>
            <person name="Ding Y."/>
            <person name="Dugan-Rocha S."/>
            <person name="Gill R."/>
            <person name="Gunaratne P."/>
            <person name="Harris R.A."/>
            <person name="Hawes A.C."/>
            <person name="Hernandez J."/>
            <person name="Hodgson A.V."/>
            <person name="Hume J."/>
            <person name="Jackson A."/>
            <person name="Khan Z.M."/>
            <person name="Kovar-Smith C."/>
            <person name="Lewis L.R."/>
            <person name="Lozado R.J."/>
            <person name="Metzker M.L."/>
            <person name="Milosavljevic A."/>
            <person name="Miner G.R."/>
            <person name="Morgan M.B."/>
            <person name="Nazareth L.V."/>
            <person name="Scott G."/>
            <person name="Sodergren E."/>
            <person name="Song X.-Z."/>
            <person name="Steffen D."/>
            <person name="Wei S."/>
            <person name="Wheeler D.A."/>
            <person name="Wright M.W."/>
            <person name="Worley K.C."/>
            <person name="Yuan Y."/>
            <person name="Zhang Z."/>
            <person name="Adams C.Q."/>
            <person name="Ansari-Lari M.A."/>
            <person name="Ayele M."/>
            <person name="Brown M.J."/>
            <person name="Chen G."/>
            <person name="Chen Z."/>
            <person name="Clendenning J."/>
            <person name="Clerc-Blankenburg K.P."/>
            <person name="Chen R."/>
            <person name="Chen Z."/>
            <person name="Davis C."/>
            <person name="Delgado O."/>
            <person name="Dinh H.H."/>
            <person name="Dong W."/>
            <person name="Draper H."/>
            <person name="Ernst S."/>
            <person name="Fu G."/>
            <person name="Gonzalez-Garay M.L."/>
            <person name="Garcia D.K."/>
            <person name="Gillett W."/>
            <person name="Gu J."/>
            <person name="Hao B."/>
            <person name="Haugen E."/>
            <person name="Havlak P."/>
            <person name="He X."/>
            <person name="Hennig S."/>
            <person name="Hu S."/>
            <person name="Huang W."/>
            <person name="Jackson L.R."/>
            <person name="Jacob L.S."/>
            <person name="Kelly S.H."/>
            <person name="Kube M."/>
            <person name="Levy R."/>
            <person name="Li Z."/>
            <person name="Liu B."/>
            <person name="Liu J."/>
            <person name="Liu W."/>
            <person name="Lu J."/>
            <person name="Maheshwari M."/>
            <person name="Nguyen B.-V."/>
            <person name="Okwuonu G.O."/>
            <person name="Palmeiri A."/>
            <person name="Pasternak S."/>
            <person name="Perez L.M."/>
            <person name="Phelps K.A."/>
            <person name="Plopper F.J."/>
            <person name="Qiang B."/>
            <person name="Raymond C."/>
            <person name="Rodriguez R."/>
            <person name="Saenphimmachak C."/>
            <person name="Santibanez J."/>
            <person name="Shen H."/>
            <person name="Shen Y."/>
            <person name="Subramanian S."/>
            <person name="Tabor P.E."/>
            <person name="Verduzco D."/>
            <person name="Waldron L."/>
            <person name="Wang J."/>
            <person name="Wang J."/>
            <person name="Wang Q."/>
            <person name="Williams G.A."/>
            <person name="Wong G.K.-S."/>
            <person name="Yao Z."/>
            <person name="Zhang J."/>
            <person name="Zhang X."/>
            <person name="Zhao G."/>
            <person name="Zhou J."/>
            <person name="Zhou Y."/>
            <person name="Nelson D."/>
            <person name="Lehrach H."/>
            <person name="Reinhardt R."/>
            <person name="Naylor S.L."/>
            <person name="Yang H."/>
            <person name="Olson M."/>
            <person name="Weinstock G."/>
            <person name="Gibbs R.A."/>
        </authorList>
    </citation>
    <scope>NUCLEOTIDE SEQUENCE [LARGE SCALE GENOMIC DNA]</scope>
</reference>
<reference key="7">
    <citation type="journal article" date="2004" name="Genome Res.">
        <title>The status, quality, and expansion of the NIH full-length cDNA project: the Mammalian Gene Collection (MGC).</title>
        <authorList>
            <consortium name="The MGC Project Team"/>
        </authorList>
    </citation>
    <scope>NUCLEOTIDE SEQUENCE [LARGE SCALE MRNA]</scope>
    <scope>POLYMORPHISM OF POLY-ALA REGION</scope>
    <source>
        <tissue>Brain</tissue>
        <tissue>Kidney</tissue>
        <tissue>Muscle</tissue>
        <tissue>Ovary</tissue>
        <tissue>Skin</tissue>
    </source>
</reference>
<reference key="8">
    <citation type="journal article" date="2001" name="Genomics">
        <title>A complete map of the human ribosomal protein genes: assignment of 80 genes to the cytogenetic map and implications for human disorders.</title>
        <authorList>
            <person name="Uechi T."/>
            <person name="Tanaka T."/>
            <person name="Kenmochi N."/>
        </authorList>
    </citation>
    <scope>NUCLEOTIDE SEQUENCE [GENOMIC DNA] OF 85-116</scope>
</reference>
<reference key="9">
    <citation type="journal article" date="2003" name="J. Protein Chem.">
        <title>Characterization and analysis of posttranslational modifications of the human large cytoplasmic ribosomal subunit proteins by mass spectrometry and Edman sequencing.</title>
        <authorList>
            <person name="Odintsova T.I."/>
            <person name="Muller E.C."/>
            <person name="Ivanov A.V."/>
            <person name="Egorov T.A."/>
            <person name="Bienert R."/>
            <person name="Vladimirov S.N."/>
            <person name="Kostka S."/>
            <person name="Otto A."/>
            <person name="Wittmann-Liebold B."/>
            <person name="Karpova G.G."/>
        </authorList>
    </citation>
    <scope>PROTEIN SEQUENCE OF 2-10</scope>
    <scope>IDENTIFICATION BY MASS SPECTROMETRY</scope>
    <scope>FUNCTION</scope>
    <scope>SUBUNIT</scope>
</reference>
<reference key="10">
    <citation type="submission" date="2005-08" db="UniProtKB">
        <authorList>
            <person name="Bienvenut W.V."/>
        </authorList>
    </citation>
    <scope>PROTEIN SEQUENCE OF 12-46; 80-85; 104-109; 148-158 AND 188-193</scope>
    <scope>VARIANT 158-ALA-ALA-159 DEL</scope>
    <scope>IDENTIFICATION BY MASS SPECTROMETRY</scope>
    <source>
        <tissue>Cervix carcinoma</tissue>
    </source>
</reference>
<reference key="11">
    <citation type="journal article" date="2003" name="Nature">
        <title>Proteomic characterization of the human centrosome by protein correlation profiling.</title>
        <authorList>
            <person name="Andersen J.S."/>
            <person name="Wilkinson C.J."/>
            <person name="Mayor T."/>
            <person name="Mortensen P."/>
            <person name="Nigg E.A."/>
            <person name="Mann M."/>
        </authorList>
    </citation>
    <scope>IDENTIFICATION BY MASS SPECTROMETRY</scope>
    <source>
        <tissue>Lymphoblast</tissue>
    </source>
</reference>
<reference key="12">
    <citation type="journal article" date="2006" name="Cell">
        <title>Global, in vivo, and site-specific phosphorylation dynamics in signaling networks.</title>
        <authorList>
            <person name="Olsen J.V."/>
            <person name="Blagoev B."/>
            <person name="Gnad F."/>
            <person name="Macek B."/>
            <person name="Kumar C."/>
            <person name="Mortensen P."/>
            <person name="Mann M."/>
        </authorList>
    </citation>
    <scope>PHOSPHORYLATION [LARGE SCALE ANALYSIS] AT SER-139</scope>
    <scope>IDENTIFICATION BY MASS SPECTROMETRY [LARGE SCALE ANALYSIS]</scope>
    <source>
        <tissue>Cervix carcinoma</tissue>
    </source>
</reference>
<reference key="13">
    <citation type="journal article" date="2007" name="J. Proteome Res.">
        <title>Improved titanium dioxide enrichment of phosphopeptides from HeLa cells and high confident phosphopeptide identification by cross-validation of MS/MS and MS/MS/MS spectra.</title>
        <authorList>
            <person name="Yu L.R."/>
            <person name="Zhu Z."/>
            <person name="Chan K.C."/>
            <person name="Issaq H.J."/>
            <person name="Dimitrov D.S."/>
            <person name="Veenstra T.D."/>
        </authorList>
    </citation>
    <scope>PHOSPHORYLATION [LARGE SCALE ANALYSIS] AT SER-139</scope>
    <scope>IDENTIFICATION BY MASS SPECTROMETRY [LARGE SCALE ANALYSIS]</scope>
    <source>
        <tissue>Cervix carcinoma</tissue>
    </source>
</reference>
<reference key="14">
    <citation type="journal article" date="2008" name="Mol. Cell">
        <title>Kinase-selective enrichment enables quantitative phosphoproteomics of the kinome across the cell cycle.</title>
        <authorList>
            <person name="Daub H."/>
            <person name="Olsen J.V."/>
            <person name="Bairlein M."/>
            <person name="Gnad F."/>
            <person name="Oppermann F.S."/>
            <person name="Korner R."/>
            <person name="Greff Z."/>
            <person name="Keri G."/>
            <person name="Stemmann O."/>
            <person name="Mann M."/>
        </authorList>
    </citation>
    <scope>PHOSPHORYLATION [LARGE SCALE ANALYSIS] AT SER-139</scope>
    <scope>IDENTIFICATION BY MASS SPECTROMETRY [LARGE SCALE ANALYSIS]</scope>
    <source>
        <tissue>Cervix carcinoma</tissue>
    </source>
</reference>
<reference key="15">
    <citation type="journal article" date="2008" name="Proc. Natl. Acad. Sci. U.S.A.">
        <title>A quantitative atlas of mitotic phosphorylation.</title>
        <authorList>
            <person name="Dephoure N."/>
            <person name="Zhou C."/>
            <person name="Villen J."/>
            <person name="Beausoleil S.A."/>
            <person name="Bakalarski C.E."/>
            <person name="Elledge S.J."/>
            <person name="Gygi S.P."/>
        </authorList>
    </citation>
    <scope>IDENTIFICATION BY MASS SPECTROMETRY [LARGE SCALE ANALYSIS]</scope>
    <source>
        <tissue>Cervix carcinoma</tissue>
    </source>
</reference>
<reference key="16">
    <citation type="journal article" date="2009" name="Mol. Cell. Proteomics">
        <title>Large-scale proteomics analysis of the human kinome.</title>
        <authorList>
            <person name="Oppermann F.S."/>
            <person name="Gnad F."/>
            <person name="Olsen J.V."/>
            <person name="Hornberger R."/>
            <person name="Greff Z."/>
            <person name="Keri G."/>
            <person name="Mann M."/>
            <person name="Daub H."/>
        </authorList>
    </citation>
    <scope>PHOSPHORYLATION [LARGE SCALE ANALYSIS] AT SER-139</scope>
    <scope>IDENTIFICATION BY MASS SPECTROMETRY [LARGE SCALE ANALYSIS]</scope>
</reference>
<reference key="17">
    <citation type="journal article" date="2009" name="Sci. Signal.">
        <title>Quantitative phosphoproteomic analysis of T cell receptor signaling reveals system-wide modulation of protein-protein interactions.</title>
        <authorList>
            <person name="Mayya V."/>
            <person name="Lundgren D.H."/>
            <person name="Hwang S.-I."/>
            <person name="Rezaul K."/>
            <person name="Wu L."/>
            <person name="Eng J.K."/>
            <person name="Rodionov V."/>
            <person name="Han D.K."/>
        </authorList>
    </citation>
    <scope>PHOSPHORYLATION [LARGE SCALE ANALYSIS] AT SER-139</scope>
    <scope>IDENTIFICATION BY MASS SPECTROMETRY [LARGE SCALE ANALYSIS]</scope>
    <source>
        <tissue>Leukemic T-cell</tissue>
    </source>
</reference>
<reference key="18">
    <citation type="journal article" date="2009" name="Science">
        <title>Lysine acetylation targets protein complexes and co-regulates major cellular functions.</title>
        <authorList>
            <person name="Choudhary C."/>
            <person name="Kumar C."/>
            <person name="Gnad F."/>
            <person name="Nielsen M.L."/>
            <person name="Rehman M."/>
            <person name="Walther T.C."/>
            <person name="Olsen J.V."/>
            <person name="Mann M."/>
        </authorList>
    </citation>
    <scope>ACETYLATION [LARGE SCALE ANALYSIS] AT LYS-79 AND LYS-85</scope>
    <scope>IDENTIFICATION BY MASS SPECTROMETRY [LARGE SCALE ANALYSIS]</scope>
</reference>
<reference key="19">
    <citation type="journal article" date="2010" name="Sci. Signal.">
        <title>Quantitative phosphoproteomics reveals widespread full phosphorylation site occupancy during mitosis.</title>
        <authorList>
            <person name="Olsen J.V."/>
            <person name="Vermeulen M."/>
            <person name="Santamaria A."/>
            <person name="Kumar C."/>
            <person name="Miller M.L."/>
            <person name="Jensen L.J."/>
            <person name="Gnad F."/>
            <person name="Cox J."/>
            <person name="Jensen T.S."/>
            <person name="Nigg E.A."/>
            <person name="Brunak S."/>
            <person name="Mann M."/>
        </authorList>
    </citation>
    <scope>PHOSPHORYLATION [LARGE SCALE ANALYSIS] AT SER-139</scope>
    <scope>IDENTIFICATION BY MASS SPECTROMETRY [LARGE SCALE ANALYSIS]</scope>
    <source>
        <tissue>Cervix carcinoma</tissue>
    </source>
</reference>
<reference key="20">
    <citation type="journal article" date="2011" name="BMC Syst. Biol.">
        <title>Initial characterization of the human central proteome.</title>
        <authorList>
            <person name="Burkard T.R."/>
            <person name="Planyavsky M."/>
            <person name="Kaupe I."/>
            <person name="Breitwieser F.P."/>
            <person name="Buerckstuemmer T."/>
            <person name="Bennett K.L."/>
            <person name="Superti-Furga G."/>
            <person name="Colinge J."/>
        </authorList>
    </citation>
    <scope>IDENTIFICATION BY MASS SPECTROMETRY [LARGE SCALE ANALYSIS]</scope>
</reference>
<reference key="21">
    <citation type="journal article" date="2011" name="Sci. Signal.">
        <title>System-wide temporal characterization of the proteome and phosphoproteome of human embryonic stem cell differentiation.</title>
        <authorList>
            <person name="Rigbolt K.T."/>
            <person name="Prokhorova T.A."/>
            <person name="Akimov V."/>
            <person name="Henningsen J."/>
            <person name="Johansen P.T."/>
            <person name="Kratchmarova I."/>
            <person name="Kassem M."/>
            <person name="Mann M."/>
            <person name="Olsen J.V."/>
            <person name="Blagoev B."/>
        </authorList>
    </citation>
    <scope>PHOSPHORYLATION [LARGE SCALE ANALYSIS] AT SER-139</scope>
    <scope>IDENTIFICATION BY MASS SPECTROMETRY [LARGE SCALE ANALYSIS]</scope>
</reference>
<reference key="22">
    <citation type="journal article" date="2013" name="J. Proteome Res.">
        <title>Toward a comprehensive characterization of a human cancer cell phosphoproteome.</title>
        <authorList>
            <person name="Zhou H."/>
            <person name="Di Palma S."/>
            <person name="Preisinger C."/>
            <person name="Peng M."/>
            <person name="Polat A.N."/>
            <person name="Heck A.J."/>
            <person name="Mohammed S."/>
        </authorList>
    </citation>
    <scope>PHOSPHORYLATION [LARGE SCALE ANALYSIS] AT SER-139</scope>
    <scope>IDENTIFICATION BY MASS SPECTROMETRY [LARGE SCALE ANALYSIS]</scope>
    <source>
        <tissue>Cervix carcinoma</tissue>
        <tissue>Erythroleukemia</tissue>
    </source>
</reference>
<reference key="23">
    <citation type="journal article" date="2014" name="Curr. Opin. Struct. Biol.">
        <title>A new system for naming ribosomal proteins.</title>
        <authorList>
            <person name="Ban N."/>
            <person name="Beckmann R."/>
            <person name="Cate J.H.D."/>
            <person name="Dinman J.D."/>
            <person name="Dragon F."/>
            <person name="Ellis S.R."/>
            <person name="Lafontaine D.L.J."/>
            <person name="Lindahl L."/>
            <person name="Liljas A."/>
            <person name="Lipton J.M."/>
            <person name="McAlear M.A."/>
            <person name="Moore P.B."/>
            <person name="Noller H.F."/>
            <person name="Ortega J."/>
            <person name="Panse V.G."/>
            <person name="Ramakrishnan V."/>
            <person name="Spahn C.M.T."/>
            <person name="Steitz T.A."/>
            <person name="Tchorzewski M."/>
            <person name="Tollervey D."/>
            <person name="Warren A.J."/>
            <person name="Williamson J.R."/>
            <person name="Wilson D."/>
            <person name="Yonath A."/>
            <person name="Yusupov M."/>
        </authorList>
    </citation>
    <scope>NOMENCLATURE</scope>
</reference>
<reference key="24">
    <citation type="journal article" date="2014" name="Nat. Struct. Mol. Biol.">
        <title>Uncovering global SUMOylation signaling networks in a site-specific manner.</title>
        <authorList>
            <person name="Hendriks I.A."/>
            <person name="D'Souza R.C."/>
            <person name="Yang B."/>
            <person name="Verlaan-de Vries M."/>
            <person name="Mann M."/>
            <person name="Vertegaal A.C."/>
        </authorList>
    </citation>
    <scope>SUMOYLATION [LARGE SCALE ANALYSIS] AT LYS-124</scope>
    <scope>IDENTIFICATION BY MASS SPECTROMETRY [LARGE SCALE ANALYSIS]</scope>
</reference>
<reference key="25">
    <citation type="journal article" date="2015" name="Proteomics">
        <title>N-terminome analysis of the human mitochondrial proteome.</title>
        <authorList>
            <person name="Vaca Jacome A.S."/>
            <person name="Rabilloud T."/>
            <person name="Schaeffer-Reiss C."/>
            <person name="Rompais M."/>
            <person name="Ayoub D."/>
            <person name="Lane L."/>
            <person name="Bairoch A."/>
            <person name="Van Dorsselaer A."/>
            <person name="Carapito C."/>
        </authorList>
    </citation>
    <scope>IDENTIFICATION BY MASS SPECTROMETRY [LARGE SCALE ANALYSIS]</scope>
</reference>
<reference key="26">
    <citation type="journal article" date="2017" name="Nat. Struct. Mol. Biol.">
        <title>Site-specific mapping of the human SUMO proteome reveals co-modification with phosphorylation.</title>
        <authorList>
            <person name="Hendriks I.A."/>
            <person name="Lyon D."/>
            <person name="Young C."/>
            <person name="Jensen L.J."/>
            <person name="Vertegaal A.C."/>
            <person name="Nielsen M.L."/>
        </authorList>
    </citation>
    <scope>SUMOYLATION [LARGE SCALE ANALYSIS] AT LYS-124</scope>
    <scope>IDENTIFICATION BY MASS SPECTROMETRY [LARGE SCALE ANALYSIS]</scope>
</reference>
<reference key="27">
    <citation type="journal article" date="2013" name="Nature">
        <title>Structures of the human and Drosophila 80S ribosome.</title>
        <authorList>
            <person name="Anger A.M."/>
            <person name="Armache J.P."/>
            <person name="Berninghausen O."/>
            <person name="Habeck M."/>
            <person name="Subklewe M."/>
            <person name="Wilson D.N."/>
            <person name="Beckmann R."/>
        </authorList>
    </citation>
    <scope>STRUCTURE BY ELECTRON MICROSCOPY (5.0 ANGSTROMS)</scope>
    <scope>FUNCTION</scope>
    <scope>SUBUNIT</scope>
    <scope>SUBCELLULAR LOCATION</scope>
</reference>
<reference evidence="18 19 20 21" key="28">
    <citation type="journal article" date="2020" name="Nat. Commun.">
        <title>Structural snapshots of human pre-60S ribosomal particles before and after nuclear export.</title>
        <authorList>
            <person name="Liang X."/>
            <person name="Zuo M.Q."/>
            <person name="Zhang Y."/>
            <person name="Li N."/>
            <person name="Ma C."/>
            <person name="Dong M.Q."/>
            <person name="Gao N."/>
        </authorList>
    </citation>
    <scope>STRUCTURE BY ELECTRON MICROSCOPY (3.09 ANGSTROMS)</scope>
    <scope>FUNCTION</scope>
    <scope>SUBUNIT</scope>
</reference>
<organism>
    <name type="scientific">Homo sapiens</name>
    <name type="common">Human</name>
    <dbReference type="NCBI Taxonomy" id="9606"/>
    <lineage>
        <taxon>Eukaryota</taxon>
        <taxon>Metazoa</taxon>
        <taxon>Chordata</taxon>
        <taxon>Craniata</taxon>
        <taxon>Vertebrata</taxon>
        <taxon>Euteleostomi</taxon>
        <taxon>Mammalia</taxon>
        <taxon>Eutheria</taxon>
        <taxon>Euarchontoglires</taxon>
        <taxon>Primates</taxon>
        <taxon>Haplorrhini</taxon>
        <taxon>Catarrhini</taxon>
        <taxon>Hominidae</taxon>
        <taxon>Homo</taxon>
    </lineage>
</organism>
<evidence type="ECO:0000250" key="1">
    <source>
        <dbReference type="UniProtKB" id="Q9CR57"/>
    </source>
</evidence>
<evidence type="ECO:0000256" key="2">
    <source>
        <dbReference type="SAM" id="MobiDB-lite"/>
    </source>
</evidence>
<evidence type="ECO:0000269" key="3">
    <source>
    </source>
</evidence>
<evidence type="ECO:0000269" key="4">
    <source>
    </source>
</evidence>
<evidence type="ECO:0000269" key="5">
    <source>
    </source>
</evidence>
<evidence type="ECO:0000269" key="6">
    <source>
    </source>
</evidence>
<evidence type="ECO:0000269" key="7">
    <source>
    </source>
</evidence>
<evidence type="ECO:0000269" key="8">
    <source>
    </source>
</evidence>
<evidence type="ECO:0000269" key="9">
    <source ref="10"/>
</evidence>
<evidence type="ECO:0000269" key="10">
    <source ref="5"/>
</evidence>
<evidence type="ECO:0000303" key="11">
    <source>
    </source>
</evidence>
<evidence type="ECO:0000305" key="12"/>
<evidence type="ECO:0000305" key="13">
    <source>
    </source>
</evidence>
<evidence type="ECO:0000305" key="14">
    <source>
    </source>
</evidence>
<evidence type="ECO:0000305" key="15">
    <source>
    </source>
</evidence>
<evidence type="ECO:0000305" key="16">
    <source>
    </source>
</evidence>
<evidence type="ECO:0000305" key="17">
    <source ref="5"/>
</evidence>
<evidence type="ECO:0007744" key="18">
    <source>
        <dbReference type="PDB" id="6LQM"/>
    </source>
</evidence>
<evidence type="ECO:0007744" key="19">
    <source>
        <dbReference type="PDB" id="6LSR"/>
    </source>
</evidence>
<evidence type="ECO:0007744" key="20">
    <source>
        <dbReference type="PDB" id="6LSS"/>
    </source>
</evidence>
<evidence type="ECO:0007744" key="21">
    <source>
        <dbReference type="PDB" id="6LU8"/>
    </source>
</evidence>
<evidence type="ECO:0007744" key="22">
    <source>
    </source>
</evidence>
<evidence type="ECO:0007744" key="23">
    <source>
    </source>
</evidence>
<evidence type="ECO:0007744" key="24">
    <source>
    </source>
</evidence>
<evidence type="ECO:0007744" key="25">
    <source>
    </source>
</evidence>
<evidence type="ECO:0007744" key="26">
    <source>
    </source>
</evidence>
<evidence type="ECO:0007744" key="27">
    <source>
    </source>
</evidence>
<evidence type="ECO:0007744" key="28">
    <source>
    </source>
</evidence>
<evidence type="ECO:0007744" key="29">
    <source>
    </source>
</evidence>
<evidence type="ECO:0007744" key="30">
    <source>
    </source>
</evidence>
<evidence type="ECO:0007744" key="31">
    <source>
    </source>
</evidence>
<evidence type="ECO:0007744" key="32">
    <source>
    </source>
</evidence>
<protein>
    <recommendedName>
        <fullName evidence="11">Large ribosomal subunit protein eL14</fullName>
    </recommendedName>
    <alternativeName>
        <fullName>60S ribosomal protein L14</fullName>
    </alternativeName>
    <alternativeName>
        <fullName>CAG-ISL 7</fullName>
    </alternativeName>
</protein>
<name>RL14_HUMAN</name>
<feature type="initiator methionine" description="Removed" evidence="4">
    <location>
        <position position="1"/>
    </location>
</feature>
<feature type="chain" id="PRO_0000132031" description="Large ribosomal subunit protein eL14">
    <location>
        <begin position="2"/>
        <end position="215"/>
    </location>
</feature>
<feature type="repeat" description="1-1">
    <location>
        <begin position="171"/>
        <end position="175"/>
    </location>
</feature>
<feature type="repeat" description="1-2">
    <location>
        <begin position="176"/>
        <end position="180"/>
    </location>
</feature>
<feature type="repeat" description="1-3">
    <location>
        <begin position="181"/>
        <end position="185"/>
    </location>
</feature>
<feature type="repeat" description="1-4">
    <location>
        <begin position="186"/>
        <end position="190"/>
    </location>
</feature>
<feature type="repeat" description="2-1">
    <location>
        <begin position="193"/>
        <end position="195"/>
    </location>
</feature>
<feature type="repeat" description="2-2">
    <location>
        <begin position="196"/>
        <end position="198"/>
    </location>
</feature>
<feature type="region of interest" description="Disordered" evidence="2">
    <location>
        <begin position="161"/>
        <end position="215"/>
    </location>
</feature>
<feature type="region of interest" description="4 X 5 AA tandem repeats of Q-K-A-[PAS]-X">
    <location>
        <begin position="171"/>
        <end position="190"/>
    </location>
</feature>
<feature type="region of interest" description="2 X 3 AA tandem repeats of K-[GA]-Q">
    <location>
        <begin position="193"/>
        <end position="198"/>
    </location>
</feature>
<feature type="modified residue" description="N6-acetyllysine" evidence="26">
    <location>
        <position position="79"/>
    </location>
</feature>
<feature type="modified residue" description="N6-acetyllysine; alternate" evidence="26">
    <location>
        <position position="85"/>
    </location>
</feature>
<feature type="modified residue" description="N6-succinyllysine; alternate" evidence="1">
    <location>
        <position position="85"/>
    </location>
</feature>
<feature type="modified residue" description="Phosphoserine" evidence="22 23 24 25 27 28 29 30">
    <location>
        <position position="139"/>
    </location>
</feature>
<feature type="modified residue" description="N6-succinyllysine" evidence="1">
    <location>
        <position position="204"/>
    </location>
</feature>
<feature type="cross-link" description="Glycyl lysine isopeptide (Lys-Gly) (interchain with G-Cter in SUMO2)" evidence="31 32">
    <location>
        <position position="124"/>
    </location>
</feature>
<feature type="sequence variant" id="VAR_013633" description="In dbSNP:rs929099541.">
    <original>A</original>
    <variation>S</variation>
    <location>
        <position position="138"/>
    </location>
</feature>
<feature type="sequence variant" id="VAR_047109" evidence="7 9">
    <location>
        <begin position="158"/>
        <end position="159"/>
    </location>
</feature>
<feature type="sequence variant" id="VAR_013634">
    <original>A</original>
    <variation>AA</variation>
    <location>
        <position position="159"/>
    </location>
</feature>
<feature type="sequence variant" id="VAR_014070">
    <original>A</original>
    <variation>AAA</variation>
    <location>
        <position position="159"/>
    </location>
</feature>
<feature type="sequence variant" id="VAR_013635">
    <original>A</original>
    <variation>AAAA</variation>
    <location>
        <position position="159"/>
    </location>
</feature>
<feature type="sequence variant" id="VAR_013636">
    <original>A</original>
    <variation>AAAAA</variation>
    <location>
        <position position="159"/>
    </location>
</feature>
<feature type="sequence variant" id="VAR_006923" evidence="3 8 10">
    <original>A</original>
    <variation>AAAAAA</variation>
    <location>
        <position position="159"/>
    </location>
</feature>
<feature type="sequence variant" id="VAR_013637">
    <original>A</original>
    <variation>AAAAAAAA</variation>
    <location>
        <position position="159"/>
    </location>
</feature>
<feature type="sequence conflict" description="In Ref. 2; BAA13443." evidence="12" ref="2">
    <original>P</original>
    <variation>L</variation>
    <location>
        <position position="65"/>
    </location>
</feature>
<sequence length="215" mass="23432">MVFRRFVEVGRVAYVSFGPHAGKLVAIVDVIDQNRALVDGPCTQVRRQAMPFKCMQLTDFILKFPHSAHQKYVRQAWQKADINTKWAATRWAKKIEARERKAKMTDFDRFKVMKAKKMRNRIIKNEVKKLQKAALLKASPKKAPGTKGTAAAAAAAAAAKVPAKKITAASKKAPAQKVPAQKATGQKAAPAPKAQKGQKAPAQKAPAPKASGKKA</sequence>
<keyword id="KW-0002">3D-structure</keyword>
<keyword id="KW-0007">Acetylation</keyword>
<keyword id="KW-0963">Cytoplasm</keyword>
<keyword id="KW-0903">Direct protein sequencing</keyword>
<keyword id="KW-1017">Isopeptide bond</keyword>
<keyword id="KW-0597">Phosphoprotein</keyword>
<keyword id="KW-1267">Proteomics identification</keyword>
<keyword id="KW-1185">Reference proteome</keyword>
<keyword id="KW-0677">Repeat</keyword>
<keyword id="KW-0687">Ribonucleoprotein</keyword>
<keyword id="KW-0689">Ribosomal protein</keyword>
<keyword id="KW-0818">Triplet repeat expansion</keyword>
<keyword id="KW-0832">Ubl conjugation</keyword>
<proteinExistence type="evidence at protein level"/>